<organism>
    <name type="scientific">Rattus norvegicus</name>
    <name type="common">Rat</name>
    <dbReference type="NCBI Taxonomy" id="10116"/>
    <lineage>
        <taxon>Eukaryota</taxon>
        <taxon>Metazoa</taxon>
        <taxon>Chordata</taxon>
        <taxon>Craniata</taxon>
        <taxon>Vertebrata</taxon>
        <taxon>Euteleostomi</taxon>
        <taxon>Mammalia</taxon>
        <taxon>Eutheria</taxon>
        <taxon>Euarchontoglires</taxon>
        <taxon>Glires</taxon>
        <taxon>Rodentia</taxon>
        <taxon>Myomorpha</taxon>
        <taxon>Muroidea</taxon>
        <taxon>Muridae</taxon>
        <taxon>Murinae</taxon>
        <taxon>Rattus</taxon>
    </lineage>
</organism>
<keyword id="KW-0880">Kelch repeat</keyword>
<keyword id="KW-0539">Nucleus</keyword>
<keyword id="KW-1185">Reference proteome</keyword>
<keyword id="KW-0677">Repeat</keyword>
<keyword id="KW-0832">Ubl conjugation</keyword>
<keyword id="KW-0833">Ubl conjugation pathway</keyword>
<name>KLDC2_RAT</name>
<gene>
    <name evidence="3" type="primary">Klhdc2</name>
</gene>
<protein>
    <recommendedName>
        <fullName evidence="2">Kelch domain-containing protein 2</fullName>
    </recommendedName>
</protein>
<evidence type="ECO:0000250" key="1">
    <source>
        <dbReference type="UniProtKB" id="Q9Y2U9"/>
    </source>
</evidence>
<evidence type="ECO:0000305" key="2"/>
<evidence type="ECO:0000312" key="3">
    <source>
        <dbReference type="RGD" id="1306504"/>
    </source>
</evidence>
<sequence>MADGNEDARAEDMPGPAFEGYEAMELACPAERSGHVAVSDGRHMFVWGGYKSNQVRGLYDFYLPREELWIYNMETGRWKKINTEGDVPPSMSGSCAVCVDRVLYLFGGHHSRGNTNKFYMLDSRSADRVLQWERIDCQGIPPSSKDKLGVWVYKNKLIFFGGYGYLPEDKVLGTFEFDETSFWNSSHPRGWNDHVHILDTETFAWSQPITTGKAPSPRAAHACATVGNKGFVFGGRYRDARMNDLHYLNLDTWEWNELIPQGICPVGRSWHSLTPVSSDHLFLFGGFTTEKQPLSDAWTYCISKNEWIQFNHPYVEKPRLWHTACASDEGEVIVFGGCANNLLVHHRAAHSNEVLIFSVQPKSLVRLSLEAVICFKEMLANSWSCLPKHLLHSVNQRFGSNNTSGS</sequence>
<reference key="1">
    <citation type="journal article" date="2004" name="Genome Res.">
        <title>The status, quality, and expansion of the NIH full-length cDNA project: the Mammalian Gene Collection (MGC).</title>
        <authorList>
            <consortium name="The MGC Project Team"/>
        </authorList>
    </citation>
    <scope>NUCLEOTIDE SEQUENCE [LARGE SCALE MRNA]</scope>
    <source>
        <tissue>Prostate</tissue>
    </source>
</reference>
<accession>Q3KRE6</accession>
<dbReference type="EMBL" id="BC105756">
    <property type="protein sequence ID" value="AAI05757.1"/>
    <property type="molecule type" value="mRNA"/>
</dbReference>
<dbReference type="RefSeq" id="NP_001029305.1">
    <property type="nucleotide sequence ID" value="NM_001034133.1"/>
</dbReference>
<dbReference type="SMR" id="Q3KRE6"/>
<dbReference type="FunCoup" id="Q3KRE6">
    <property type="interactions" value="2336"/>
</dbReference>
<dbReference type="STRING" id="10116.ENSRNOP00000006223"/>
<dbReference type="PhosphoSitePlus" id="Q3KRE6"/>
<dbReference type="PaxDb" id="10116-ENSRNOP00000006223"/>
<dbReference type="Ensembl" id="ENSRNOT00000006223.6">
    <property type="protein sequence ID" value="ENSRNOP00000006223.3"/>
    <property type="gene ID" value="ENSRNOG00000004474.6"/>
</dbReference>
<dbReference type="GeneID" id="299113"/>
<dbReference type="KEGG" id="rno:299113"/>
<dbReference type="UCSC" id="RGD:1306504">
    <property type="organism name" value="rat"/>
</dbReference>
<dbReference type="AGR" id="RGD:1306504"/>
<dbReference type="CTD" id="23588"/>
<dbReference type="RGD" id="1306504">
    <property type="gene designation" value="Klhdc2"/>
</dbReference>
<dbReference type="eggNOG" id="KOG0379">
    <property type="taxonomic scope" value="Eukaryota"/>
</dbReference>
<dbReference type="GeneTree" id="ENSGT00940000157150"/>
<dbReference type="HOGENOM" id="CLU_042804_0_0_1"/>
<dbReference type="InParanoid" id="Q3KRE6"/>
<dbReference type="OMA" id="MGKLLQF"/>
<dbReference type="OrthoDB" id="10251809at2759"/>
<dbReference type="PhylomeDB" id="Q3KRE6"/>
<dbReference type="TreeFam" id="TF314081"/>
<dbReference type="UniPathway" id="UPA00143"/>
<dbReference type="PRO" id="PR:Q3KRE6"/>
<dbReference type="Proteomes" id="UP000002494">
    <property type="component" value="Chromosome 6"/>
</dbReference>
<dbReference type="Bgee" id="ENSRNOG00000004474">
    <property type="expression patterns" value="Expressed in cerebellum and 19 other cell types or tissues"/>
</dbReference>
<dbReference type="GO" id="GO:0031462">
    <property type="term" value="C:Cul2-RING ubiquitin ligase complex"/>
    <property type="evidence" value="ECO:0000250"/>
    <property type="project" value="UniProtKB"/>
</dbReference>
<dbReference type="GO" id="GO:0005634">
    <property type="term" value="C:nucleus"/>
    <property type="evidence" value="ECO:0000250"/>
    <property type="project" value="UniProtKB"/>
</dbReference>
<dbReference type="GO" id="GO:1990756">
    <property type="term" value="F:ubiquitin-like ligase-substrate adaptor activity"/>
    <property type="evidence" value="ECO:0000250"/>
    <property type="project" value="UniProtKB"/>
</dbReference>
<dbReference type="GO" id="GO:0043161">
    <property type="term" value="P:proteasome-mediated ubiquitin-dependent protein catabolic process"/>
    <property type="evidence" value="ECO:0000250"/>
    <property type="project" value="UniProtKB"/>
</dbReference>
<dbReference type="GO" id="GO:0016567">
    <property type="term" value="P:protein ubiquitination"/>
    <property type="evidence" value="ECO:0007669"/>
    <property type="project" value="UniProtKB-UniPathway"/>
</dbReference>
<dbReference type="GO" id="GO:0140627">
    <property type="term" value="P:ubiquitin-dependent protein catabolic process via the C-end degron rule pathway"/>
    <property type="evidence" value="ECO:0000250"/>
    <property type="project" value="UniProtKB"/>
</dbReference>
<dbReference type="FunFam" id="2.120.10.80:FF:000012">
    <property type="entry name" value="Kelch domain-containing protein 2"/>
    <property type="match status" value="1"/>
</dbReference>
<dbReference type="FunFam" id="2.120.10.80:FF:000043">
    <property type="entry name" value="Kelch domain-containing protein 2"/>
    <property type="match status" value="1"/>
</dbReference>
<dbReference type="Gene3D" id="2.120.10.80">
    <property type="entry name" value="Kelch-type beta propeller"/>
    <property type="match status" value="2"/>
</dbReference>
<dbReference type="InterPro" id="IPR015915">
    <property type="entry name" value="Kelch-typ_b-propeller"/>
</dbReference>
<dbReference type="PANTHER" id="PTHR46228">
    <property type="entry name" value="KELCH DOMAIN-CONTAINING PROTEIN"/>
    <property type="match status" value="1"/>
</dbReference>
<dbReference type="PANTHER" id="PTHR46228:SF3">
    <property type="entry name" value="KELCH DOMAIN-CONTAINING PROTEIN 2"/>
    <property type="match status" value="1"/>
</dbReference>
<dbReference type="Pfam" id="PF24681">
    <property type="entry name" value="Kelch_KLHDC2_KLHL20_DRC7"/>
    <property type="match status" value="1"/>
</dbReference>
<dbReference type="SUPFAM" id="SSF117281">
    <property type="entry name" value="Kelch motif"/>
    <property type="match status" value="2"/>
</dbReference>
<proteinExistence type="evidence at transcript level"/>
<feature type="chain" id="PRO_0000228994" description="Kelch domain-containing protein 2">
    <location>
        <begin position="1"/>
        <end position="406"/>
    </location>
</feature>
<feature type="repeat" description="Kelch 1" evidence="1">
    <location>
        <begin position="31"/>
        <end position="85"/>
    </location>
</feature>
<feature type="repeat" description="Kelch 2" evidence="1">
    <location>
        <begin position="92"/>
        <end position="136"/>
    </location>
</feature>
<feature type="repeat" description="Kelch 3" evidence="1">
    <location>
        <begin position="148"/>
        <end position="207"/>
    </location>
</feature>
<feature type="repeat" description="Kelch 4" evidence="1">
    <location>
        <begin position="221"/>
        <end position="259"/>
    </location>
</feature>
<feature type="repeat" description="Kelch 5" evidence="1">
    <location>
        <begin position="271"/>
        <end position="311"/>
    </location>
</feature>
<feature type="repeat" description="Kelch 6" evidence="1">
    <location>
        <begin position="322"/>
        <end position="359"/>
    </location>
</feature>
<comment type="function">
    <text evidence="1">Substrate-recognition component of a Cul2-RING (CRL2) E3 ubiquitin-protein ligase complex of the DesCEND (destruction via C-end degrons) pathway, which recognizes a C-degron located at the extreme C terminus of target proteins, leading to their ubiquitination and degradation (By similarity). The C-degron recognized by the DesCEND pathway is usually a motif of less than ten residues and can be present in full-length proteins, truncated proteins or proteolytically cleaved forms (By similarity). The CRL2(KLHDC2) complex specifically recognizes proteins with a diglycine (Gly-Gly) at the C-terminus, leading to their ubiquitination and degradation (By similarity). The CRL2(KLHDC2) complex mediates ubiquitination and degradation of truncated SELENOK and SELENOS selenoproteins produced by failed UGA/Sec decoding, which end with a diglycine (By similarity). The CRL2(KLHDC2) complex also recognizes proteolytically cleaved proteins ending with Gly-Gly, such as the N-terminal fragment of USP1, leading to their degradation (By similarity). May also act as an indirect repressor of CREB3-mediated transcription by interfering with CREB3-DNA-binding (By similarity).</text>
</comment>
<comment type="pathway">
    <text evidence="1">Protein modification; protein ubiquitination.</text>
</comment>
<comment type="subunit">
    <text evidence="1">Component of a CRL2(KLHDC2) E3 ubiquitin-protein ligase complex, also named ECS(KLHDC2) complex, composed of CUL2, Elongin BC (ELOB and ELOC), RBX1 and substrate-specific adapter KLHDC2 (By similarity). May form oligomers as a KLHDC2-ELOB-ELOC complex; this interaction is autoinhibitory for the E3 ligase complex as the substrate-binding site of KLHDC2 is blocked in the oligomer (By similarity). Interacts with CREB3; interaction is direct and specific as it does not interact with CREB1, ATF4, ATF6, JUN, FOS, CEBPA or herpes simplex virus transactivator VP16 (By similarity).</text>
</comment>
<comment type="subcellular location">
    <subcellularLocation>
        <location evidence="1">Nucleus</location>
    </subcellularLocation>
</comment>
<comment type="PTM">
    <text evidence="1">Autoubiquitinated by the CRL2(KLHDC2) E3 ligase complex.</text>
</comment>